<keyword id="KW-0175">Coiled coil</keyword>
<keyword id="KW-0433">Leucine-rich repeat</keyword>
<keyword id="KW-1185">Reference proteome</keyword>
<keyword id="KW-0677">Repeat</keyword>
<evidence type="ECO:0000255" key="1"/>
<evidence type="ECO:0000255" key="2">
    <source>
        <dbReference type="PROSITE-ProRule" id="PRU00084"/>
    </source>
</evidence>
<evidence type="ECO:0000256" key="3">
    <source>
        <dbReference type="SAM" id="MobiDB-lite"/>
    </source>
</evidence>
<dbReference type="EMBL" id="AAFI02000137">
    <property type="status" value="NOT_ANNOTATED_CDS"/>
    <property type="molecule type" value="Genomic_DNA"/>
</dbReference>
<dbReference type="EMBL" id="AAFI02000138">
    <property type="status" value="NOT_ANNOTATED_CDS"/>
    <property type="molecule type" value="Genomic_DNA"/>
</dbReference>
<dbReference type="SMR" id="P0CD60"/>
<dbReference type="FunCoup" id="P0CD60">
    <property type="interactions" value="311"/>
</dbReference>
<dbReference type="dictyBase" id="DDB_G0289313">
    <property type="gene designation" value="frmC"/>
</dbReference>
<dbReference type="VEuPathDB" id="AmoebaDB:DDB_G0290481"/>
<dbReference type="VEuPathDB" id="AmoebaDB:DDB_G0290485"/>
<dbReference type="InParanoid" id="P0CD60"/>
<dbReference type="OMA" id="IMTCNTI"/>
<dbReference type="PRO" id="PR:P0CD60"/>
<dbReference type="Proteomes" id="UP000002195">
    <property type="component" value="Chromosome 5"/>
</dbReference>
<dbReference type="GO" id="GO:0005737">
    <property type="term" value="C:cytoplasm"/>
    <property type="evidence" value="ECO:0000318"/>
    <property type="project" value="GO_Central"/>
</dbReference>
<dbReference type="GO" id="GO:0005856">
    <property type="term" value="C:cytoskeleton"/>
    <property type="evidence" value="ECO:0007669"/>
    <property type="project" value="InterPro"/>
</dbReference>
<dbReference type="GO" id="GO:0005886">
    <property type="term" value="C:plasma membrane"/>
    <property type="evidence" value="ECO:0000318"/>
    <property type="project" value="GO_Central"/>
</dbReference>
<dbReference type="GO" id="GO:0098609">
    <property type="term" value="P:cell-cell adhesion"/>
    <property type="evidence" value="ECO:0000318"/>
    <property type="project" value="GO_Central"/>
</dbReference>
<dbReference type="CDD" id="cd14473">
    <property type="entry name" value="FERM_B-lobe"/>
    <property type="match status" value="1"/>
</dbReference>
<dbReference type="CDD" id="cd01765">
    <property type="entry name" value="FERM_F0_F1"/>
    <property type="match status" value="1"/>
</dbReference>
<dbReference type="Gene3D" id="1.20.80.10">
    <property type="match status" value="1"/>
</dbReference>
<dbReference type="Gene3D" id="3.10.20.90">
    <property type="entry name" value="Phosphatidylinositol 3-kinase Catalytic Subunit, Chain A, domain 1"/>
    <property type="match status" value="1"/>
</dbReference>
<dbReference type="Gene3D" id="3.80.10.10">
    <property type="entry name" value="Ribonuclease Inhibitor"/>
    <property type="match status" value="2"/>
</dbReference>
<dbReference type="InterPro" id="IPR019749">
    <property type="entry name" value="Band_41_domain"/>
</dbReference>
<dbReference type="InterPro" id="IPR014352">
    <property type="entry name" value="FERM/acyl-CoA-bd_prot_sf"/>
</dbReference>
<dbReference type="InterPro" id="IPR035963">
    <property type="entry name" value="FERM_2"/>
</dbReference>
<dbReference type="InterPro" id="IPR019748">
    <property type="entry name" value="FERM_central"/>
</dbReference>
<dbReference type="InterPro" id="IPR000299">
    <property type="entry name" value="FERM_domain"/>
</dbReference>
<dbReference type="InterPro" id="IPR018979">
    <property type="entry name" value="FERM_N"/>
</dbReference>
<dbReference type="InterPro" id="IPR032675">
    <property type="entry name" value="LRR_dom_sf"/>
</dbReference>
<dbReference type="InterPro" id="IPR029071">
    <property type="entry name" value="Ubiquitin-like_domsf"/>
</dbReference>
<dbReference type="PANTHER" id="PTHR19981:SF1">
    <property type="entry name" value="RHEA, ISOFORM B"/>
    <property type="match status" value="1"/>
</dbReference>
<dbReference type="PANTHER" id="PTHR19981">
    <property type="entry name" value="TALIN"/>
    <property type="match status" value="1"/>
</dbReference>
<dbReference type="Pfam" id="PF00373">
    <property type="entry name" value="FERM_M"/>
    <property type="match status" value="1"/>
</dbReference>
<dbReference type="Pfam" id="PF09379">
    <property type="entry name" value="FERM_N"/>
    <property type="match status" value="1"/>
</dbReference>
<dbReference type="PRINTS" id="PR00935">
    <property type="entry name" value="BAND41"/>
</dbReference>
<dbReference type="SMART" id="SM00295">
    <property type="entry name" value="B41"/>
    <property type="match status" value="1"/>
</dbReference>
<dbReference type="SMART" id="SM00368">
    <property type="entry name" value="LRR_RI"/>
    <property type="match status" value="10"/>
</dbReference>
<dbReference type="SUPFAM" id="SSF52047">
    <property type="entry name" value="RNI-like"/>
    <property type="match status" value="2"/>
</dbReference>
<dbReference type="SUPFAM" id="SSF47031">
    <property type="entry name" value="Second domain of FERM"/>
    <property type="match status" value="1"/>
</dbReference>
<dbReference type="SUPFAM" id="SSF54236">
    <property type="entry name" value="Ubiquitin-like"/>
    <property type="match status" value="1"/>
</dbReference>
<dbReference type="PROSITE" id="PS50057">
    <property type="entry name" value="FERM_3"/>
    <property type="match status" value="1"/>
</dbReference>
<organism>
    <name type="scientific">Dictyostelium discoideum</name>
    <name type="common">Social amoeba</name>
    <dbReference type="NCBI Taxonomy" id="44689"/>
    <lineage>
        <taxon>Eukaryota</taxon>
        <taxon>Amoebozoa</taxon>
        <taxon>Evosea</taxon>
        <taxon>Eumycetozoa</taxon>
        <taxon>Dictyostelia</taxon>
        <taxon>Dictyosteliales</taxon>
        <taxon>Dictyosteliaceae</taxon>
        <taxon>Dictyostelium</taxon>
    </lineage>
</organism>
<name>FRMC_DICDI</name>
<reference key="1">
    <citation type="journal article" date="2005" name="Nature">
        <title>The genome of the social amoeba Dictyostelium discoideum.</title>
        <authorList>
            <person name="Eichinger L."/>
            <person name="Pachebat J.A."/>
            <person name="Gloeckner G."/>
            <person name="Rajandream M.A."/>
            <person name="Sucgang R."/>
            <person name="Berriman M."/>
            <person name="Song J."/>
            <person name="Olsen R."/>
            <person name="Szafranski K."/>
            <person name="Xu Q."/>
            <person name="Tunggal B."/>
            <person name="Kummerfeld S."/>
            <person name="Madera M."/>
            <person name="Konfortov B.A."/>
            <person name="Rivero F."/>
            <person name="Bankier A.T."/>
            <person name="Lehmann R."/>
            <person name="Hamlin N."/>
            <person name="Davies R."/>
            <person name="Gaudet P."/>
            <person name="Fey P."/>
            <person name="Pilcher K."/>
            <person name="Chen G."/>
            <person name="Saunders D."/>
            <person name="Sodergren E.J."/>
            <person name="Davis P."/>
            <person name="Kerhornou A."/>
            <person name="Nie X."/>
            <person name="Hall N."/>
            <person name="Anjard C."/>
            <person name="Hemphill L."/>
            <person name="Bason N."/>
            <person name="Farbrother P."/>
            <person name="Desany B."/>
            <person name="Just E."/>
            <person name="Morio T."/>
            <person name="Rost R."/>
            <person name="Churcher C.M."/>
            <person name="Cooper J."/>
            <person name="Haydock S."/>
            <person name="van Driessche N."/>
            <person name="Cronin A."/>
            <person name="Goodhead I."/>
            <person name="Muzny D.M."/>
            <person name="Mourier T."/>
            <person name="Pain A."/>
            <person name="Lu M."/>
            <person name="Harper D."/>
            <person name="Lindsay R."/>
            <person name="Hauser H."/>
            <person name="James K.D."/>
            <person name="Quiles M."/>
            <person name="Madan Babu M."/>
            <person name="Saito T."/>
            <person name="Buchrieser C."/>
            <person name="Wardroper A."/>
            <person name="Felder M."/>
            <person name="Thangavelu M."/>
            <person name="Johnson D."/>
            <person name="Knights A."/>
            <person name="Loulseged H."/>
            <person name="Mungall K.L."/>
            <person name="Oliver K."/>
            <person name="Price C."/>
            <person name="Quail M.A."/>
            <person name="Urushihara H."/>
            <person name="Hernandez J."/>
            <person name="Rabbinowitsch E."/>
            <person name="Steffen D."/>
            <person name="Sanders M."/>
            <person name="Ma J."/>
            <person name="Kohara Y."/>
            <person name="Sharp S."/>
            <person name="Simmonds M.N."/>
            <person name="Spiegler S."/>
            <person name="Tivey A."/>
            <person name="Sugano S."/>
            <person name="White B."/>
            <person name="Walker D."/>
            <person name="Woodward J.R."/>
            <person name="Winckler T."/>
            <person name="Tanaka Y."/>
            <person name="Shaulsky G."/>
            <person name="Schleicher M."/>
            <person name="Weinstock G.M."/>
            <person name="Rosenthal A."/>
            <person name="Cox E.C."/>
            <person name="Chisholm R.L."/>
            <person name="Gibbs R.A."/>
            <person name="Loomis W.F."/>
            <person name="Platzer M."/>
            <person name="Kay R.R."/>
            <person name="Williams J.G."/>
            <person name="Dear P.H."/>
            <person name="Noegel A.A."/>
            <person name="Barrell B.G."/>
            <person name="Kuspa A."/>
        </authorList>
    </citation>
    <scope>NUCLEOTIDE SEQUENCE [LARGE SCALE GENOMIC DNA]</scope>
    <source>
        <strain>AX4</strain>
    </source>
</reference>
<accession>P0CD60</accession>
<protein>
    <recommendedName>
        <fullName>FERM domain-containing protein C</fullName>
    </recommendedName>
</protein>
<proteinExistence type="predicted"/>
<feature type="chain" id="PRO_0000391333" description="FERM domain-containing protein C">
    <location>
        <begin position="1"/>
        <end position="1489"/>
    </location>
</feature>
<feature type="domain" description="FERM" evidence="2">
    <location>
        <begin position="637"/>
        <end position="934"/>
    </location>
</feature>
<feature type="repeat" description="LRR 1">
    <location>
        <begin position="1017"/>
        <end position="1040"/>
    </location>
</feature>
<feature type="repeat" description="LRR 2">
    <location>
        <begin position="1053"/>
        <end position="1075"/>
    </location>
</feature>
<feature type="repeat" description="LRR 3">
    <location>
        <begin position="1087"/>
        <end position="1110"/>
    </location>
</feature>
<feature type="repeat" description="LRR 4">
    <location>
        <begin position="1111"/>
        <end position="1133"/>
    </location>
</feature>
<feature type="repeat" description="LRR 5">
    <location>
        <begin position="1167"/>
        <end position="1191"/>
    </location>
</feature>
<feature type="repeat" description="LRR 6">
    <location>
        <begin position="1196"/>
        <end position="1219"/>
    </location>
</feature>
<feature type="repeat" description="LRR 7">
    <location>
        <begin position="1254"/>
        <end position="1278"/>
    </location>
</feature>
<feature type="repeat" description="LRR 8">
    <location>
        <begin position="1282"/>
        <end position="1306"/>
    </location>
</feature>
<feature type="repeat" description="LRR 9">
    <location>
        <begin position="1339"/>
        <end position="1362"/>
    </location>
</feature>
<feature type="repeat" description="LRR 10">
    <location>
        <begin position="1367"/>
        <end position="1391"/>
    </location>
</feature>
<feature type="repeat" description="LRR 11">
    <location>
        <begin position="1395"/>
        <end position="1418"/>
    </location>
</feature>
<feature type="repeat" description="LRR 12">
    <location>
        <begin position="1428"/>
        <end position="1450"/>
    </location>
</feature>
<feature type="repeat" description="LRR 13">
    <location>
        <begin position="1451"/>
        <end position="1474"/>
    </location>
</feature>
<feature type="region of interest" description="Disordered" evidence="3">
    <location>
        <begin position="59"/>
        <end position="86"/>
    </location>
</feature>
<feature type="region of interest" description="Disordered" evidence="3">
    <location>
        <begin position="103"/>
        <end position="197"/>
    </location>
</feature>
<feature type="region of interest" description="Disordered" evidence="3">
    <location>
        <begin position="252"/>
        <end position="271"/>
    </location>
</feature>
<feature type="region of interest" description="Disordered" evidence="3">
    <location>
        <begin position="277"/>
        <end position="312"/>
    </location>
</feature>
<feature type="region of interest" description="Disordered" evidence="3">
    <location>
        <begin position="396"/>
        <end position="435"/>
    </location>
</feature>
<feature type="region of interest" description="Disordered" evidence="3">
    <location>
        <begin position="459"/>
        <end position="479"/>
    </location>
</feature>
<feature type="region of interest" description="Disordered" evidence="3">
    <location>
        <begin position="508"/>
        <end position="569"/>
    </location>
</feature>
<feature type="coiled-coil region" evidence="1">
    <location>
        <begin position="202"/>
        <end position="289"/>
    </location>
</feature>
<feature type="coiled-coil region" evidence="1">
    <location>
        <begin position="356"/>
        <end position="383"/>
    </location>
</feature>
<feature type="compositionally biased region" description="Polar residues" evidence="3">
    <location>
        <begin position="59"/>
        <end position="79"/>
    </location>
</feature>
<feature type="compositionally biased region" description="Polar residues" evidence="3">
    <location>
        <begin position="103"/>
        <end position="118"/>
    </location>
</feature>
<feature type="compositionally biased region" description="Low complexity" evidence="3">
    <location>
        <begin position="131"/>
        <end position="153"/>
    </location>
</feature>
<feature type="compositionally biased region" description="Basic residues" evidence="3">
    <location>
        <begin position="163"/>
        <end position="172"/>
    </location>
</feature>
<feature type="compositionally biased region" description="Low complexity" evidence="3">
    <location>
        <begin position="181"/>
        <end position="195"/>
    </location>
</feature>
<feature type="compositionally biased region" description="Low complexity" evidence="3">
    <location>
        <begin position="277"/>
        <end position="287"/>
    </location>
</feature>
<feature type="compositionally biased region" description="Polar residues" evidence="3">
    <location>
        <begin position="303"/>
        <end position="312"/>
    </location>
</feature>
<feature type="compositionally biased region" description="Low complexity" evidence="3">
    <location>
        <begin position="421"/>
        <end position="435"/>
    </location>
</feature>
<feature type="compositionally biased region" description="Polar residues" evidence="3">
    <location>
        <begin position="545"/>
        <end position="555"/>
    </location>
</feature>
<feature type="compositionally biased region" description="Low complexity" evidence="3">
    <location>
        <begin position="556"/>
        <end position="569"/>
    </location>
</feature>
<gene>
    <name type="primary">frmC</name>
    <name type="ORF">DDB_G0289313</name>
</gene>
<sequence length="1489" mass="166978">MEGVEDDLSKLLEELSSGVVLNNIQEKLNQSSPKLQSFIDDETGSNAEDVRRVLDAATDTESNYGGGANSITNTPNFNSHRGHQHLQLHTELSLDALRPVSENSPLHKSATRPISTSIRLPRLSVCEDDSSSSSSSSDGDSNSSSDSSDNSSEQSDDDDVHLHLHLHRHHRKVKEDEGDSFESSSESSEQYGSPSTLRRQEALKLEKIMQIQEKKKLLKEKLKEQDELELKEKQELNEITVQKEIKLKDKSNSVQNDIVDSDNNNNNNNNNSITIEEQQQEKQQQQQQHHHHHSTPNKPPKSRSVSISTPDSNIVVAGGNVISKERKRSILASFEEGSPMRSSSRLPSSRGGSIKIKVSKVLEEEMQLQQEFEKQEQLRHSARLSQLIRDLNMSSNLQDQQDQQLRKNENSNNNEGDDNNENVSNDNSSDNENQNINGSILIKEEQQEKIEITTTITTVITPPPPAQEPQHQQQPKILTPEEVEEERIRVLRIERMKDQVFSQLDELEDPLYSNGSRQRNGGGGGASTSAEPSMMQIPLTRLEDTASSSSSPTLQATKTTTTTTTTTTTTTTATLPINNKNLNIQGRPRKDSISDHWDIGRKEQPRRSMTLNIQRVGEDFSVKKAEAKKVNPDLEKILVHISLVDQSHKVICITEDFTVKDVIDLFSEKLGLVQTEFFSLAEVTSDGYDRWLDPNRAVKEAGIKNLSKLTFKIKYFKQPKKLSDSKAVHLYYLQIQQSVVNGTYPCSEAMSYRLSALQFYITFGAFDKDKHIAGFLDHGSLSEFIPSNFFFELTDEVIQKRLFHLHSQIKCSSSIEAKLRYLDLANKIPTFGVTSFQVFDGIRESSIVRQKRHLCVAEDGILISRKDRAGYDFFSYKEIISYQVTTRGLKIQIPHSSITPNTSETMSFDTSSYDQSNNIIDLMMGYKYFIQHDEFIRGIGAPVEQVDLNISLLLPLFQPPKIRTKSDPLRSRLELFKLNYLGLCQNFHTKPISKLIDQIDYILDKEGSFRNRLAFEKVELPSLNLRGSDLSFIADALKDTLNLIIEEGESIVENLNILSLDLSNNPLLATDAFEPLKIIMTCNTIIHLNLKNIGLSNKGVMPLVTIIEKYPNIETLQIGKNRVNESGVRVILRAIKNFNVKIETLGFEETNLTDSGCLIIDKLLSNNKTIKNLNISKNLITEEGFHHIFEGIKRNSLSLQDLNISGNKINSKLMIKFIKWLASSETSIITLNIAKTGLESSFGAELQKFLVGNSCHIKSLDTSYNDLGTSGTKNVIKGIINNQTITELSLCANKISSSGCNDLCQSLELASATCSKLYLRHCGLGSSSLVRIANMLELNKTITTLDLSMNEFSKSSSSAIGTMLEKNETLQEFYLADSSLGAREVESILNGLKNNSTIKKIFLDTNPIGKKGISSLANMLNTNTGLEVITLRHTNLNGKDILELLKQLSTNIPIKIINLTENTLDKITPQIKNAINDQIKRLHTINIQY</sequence>